<protein>
    <recommendedName>
        <fullName evidence="1">Gamma-glutamyl phosphate reductase</fullName>
        <shortName evidence="1">GPR</shortName>
        <ecNumber evidence="1">1.2.1.41</ecNumber>
    </recommendedName>
    <alternativeName>
        <fullName evidence="1">Glutamate-5-semialdehyde dehydrogenase</fullName>
    </alternativeName>
    <alternativeName>
        <fullName evidence="1">Glutamyl-gamma-semialdehyde dehydrogenase</fullName>
        <shortName evidence="1">GSA dehydrogenase</shortName>
    </alternativeName>
</protein>
<evidence type="ECO:0000255" key="1">
    <source>
        <dbReference type="HAMAP-Rule" id="MF_00412"/>
    </source>
</evidence>
<proteinExistence type="inferred from homology"/>
<organism>
    <name type="scientific">Thermoanaerobacter sp. (strain X514)</name>
    <dbReference type="NCBI Taxonomy" id="399726"/>
    <lineage>
        <taxon>Bacteria</taxon>
        <taxon>Bacillati</taxon>
        <taxon>Bacillota</taxon>
        <taxon>Clostridia</taxon>
        <taxon>Thermoanaerobacterales</taxon>
        <taxon>Thermoanaerobacteraceae</taxon>
        <taxon>Thermoanaerobacter</taxon>
    </lineage>
</organism>
<keyword id="KW-0028">Amino-acid biosynthesis</keyword>
<keyword id="KW-0963">Cytoplasm</keyword>
<keyword id="KW-0521">NADP</keyword>
<keyword id="KW-0560">Oxidoreductase</keyword>
<keyword id="KW-0641">Proline biosynthesis</keyword>
<name>PROA_THEPX</name>
<accession>B0K0T2</accession>
<feature type="chain" id="PRO_1000193669" description="Gamma-glutamyl phosphate reductase">
    <location>
        <begin position="1"/>
        <end position="414"/>
    </location>
</feature>
<comment type="function">
    <text evidence="1">Catalyzes the NADPH-dependent reduction of L-glutamate 5-phosphate into L-glutamate 5-semialdehyde and phosphate. The product spontaneously undergoes cyclization to form 1-pyrroline-5-carboxylate.</text>
</comment>
<comment type="catalytic activity">
    <reaction evidence="1">
        <text>L-glutamate 5-semialdehyde + phosphate + NADP(+) = L-glutamyl 5-phosphate + NADPH + H(+)</text>
        <dbReference type="Rhea" id="RHEA:19541"/>
        <dbReference type="ChEBI" id="CHEBI:15378"/>
        <dbReference type="ChEBI" id="CHEBI:43474"/>
        <dbReference type="ChEBI" id="CHEBI:57783"/>
        <dbReference type="ChEBI" id="CHEBI:58066"/>
        <dbReference type="ChEBI" id="CHEBI:58274"/>
        <dbReference type="ChEBI" id="CHEBI:58349"/>
        <dbReference type="EC" id="1.2.1.41"/>
    </reaction>
</comment>
<comment type="pathway">
    <text evidence="1">Amino-acid biosynthesis; L-proline biosynthesis; L-glutamate 5-semialdehyde from L-glutamate: step 2/2.</text>
</comment>
<comment type="subcellular location">
    <subcellularLocation>
        <location evidence="1">Cytoplasm</location>
    </subcellularLocation>
</comment>
<comment type="similarity">
    <text evidence="1">Belongs to the gamma-glutamyl phosphate reductase family.</text>
</comment>
<sequence>MEVEVKAKQAKAAARRMAVLDENTKNLALNHMADALIKDMGKILEANKKDVVEAEKRNIKASLIDRLKLDEKRVEAMAKGLREISALPDPVGSIEKMWKRPNGLQIGKMRVPIGVIGIIYESRPNVTADAAGLCLKSGNAVILRGGSDAINSNIAISSILAKAAYETGIPEGAIQLIENTDREEVNRMMKLNGLIDLIIPRGGASLIKNVIENSTVPVIETGVGNCHIFVDETAKFNIAKDIIVNAKVQRPGVCNAVETVLVHKSIAKEFLPLMVEELTSLGVEIRGCQITKEICPQVKEATDKDWETEYLDLILAVKVVDGIEEALDHISKYSTGHSESIITENYENAMMFLKSVDSAAVYVNASTRFTDGGEFGFGAEIGISTQKMHARGPMGLEELTTYKYVILGSGQIRK</sequence>
<gene>
    <name evidence="1" type="primary">proA</name>
    <name type="ordered locus">Teth514_1520</name>
</gene>
<reference key="1">
    <citation type="submission" date="2008-01" db="EMBL/GenBank/DDBJ databases">
        <title>Complete sequence of Thermoanaerobacter sp. X514.</title>
        <authorList>
            <consortium name="US DOE Joint Genome Institute"/>
            <person name="Copeland A."/>
            <person name="Lucas S."/>
            <person name="Lapidus A."/>
            <person name="Barry K."/>
            <person name="Glavina del Rio T."/>
            <person name="Dalin E."/>
            <person name="Tice H."/>
            <person name="Pitluck S."/>
            <person name="Bruce D."/>
            <person name="Goodwin L."/>
            <person name="Saunders E."/>
            <person name="Brettin T."/>
            <person name="Detter J.C."/>
            <person name="Han C."/>
            <person name="Schmutz J."/>
            <person name="Larimer F."/>
            <person name="Land M."/>
            <person name="Hauser L."/>
            <person name="Kyrpides N."/>
            <person name="Kim E."/>
            <person name="Hemme C."/>
            <person name="Fields M.W."/>
            <person name="He Z."/>
            <person name="Zhou J."/>
            <person name="Richardson P."/>
        </authorList>
    </citation>
    <scope>NUCLEOTIDE SEQUENCE [LARGE SCALE GENOMIC DNA]</scope>
    <source>
        <strain>X514</strain>
    </source>
</reference>
<dbReference type="EC" id="1.2.1.41" evidence="1"/>
<dbReference type="EMBL" id="CP000923">
    <property type="protein sequence ID" value="ABY92807.1"/>
    <property type="molecule type" value="Genomic_DNA"/>
</dbReference>
<dbReference type="RefSeq" id="WP_009052327.1">
    <property type="nucleotide sequence ID" value="NC_010320.1"/>
</dbReference>
<dbReference type="SMR" id="B0K0T2"/>
<dbReference type="KEGG" id="tex:Teth514_1520"/>
<dbReference type="HOGENOM" id="CLU_030231_0_0_9"/>
<dbReference type="UniPathway" id="UPA00098">
    <property type="reaction ID" value="UER00360"/>
</dbReference>
<dbReference type="Proteomes" id="UP000002155">
    <property type="component" value="Chromosome"/>
</dbReference>
<dbReference type="GO" id="GO:0005737">
    <property type="term" value="C:cytoplasm"/>
    <property type="evidence" value="ECO:0007669"/>
    <property type="project" value="UniProtKB-SubCell"/>
</dbReference>
<dbReference type="GO" id="GO:0004350">
    <property type="term" value="F:glutamate-5-semialdehyde dehydrogenase activity"/>
    <property type="evidence" value="ECO:0007669"/>
    <property type="project" value="UniProtKB-UniRule"/>
</dbReference>
<dbReference type="GO" id="GO:0050661">
    <property type="term" value="F:NADP binding"/>
    <property type="evidence" value="ECO:0007669"/>
    <property type="project" value="InterPro"/>
</dbReference>
<dbReference type="GO" id="GO:0055129">
    <property type="term" value="P:L-proline biosynthetic process"/>
    <property type="evidence" value="ECO:0007669"/>
    <property type="project" value="UniProtKB-UniRule"/>
</dbReference>
<dbReference type="CDD" id="cd07079">
    <property type="entry name" value="ALDH_F18-19_ProA-GPR"/>
    <property type="match status" value="1"/>
</dbReference>
<dbReference type="FunFam" id="3.40.309.10:FF:000006">
    <property type="entry name" value="Gamma-glutamyl phosphate reductase"/>
    <property type="match status" value="1"/>
</dbReference>
<dbReference type="Gene3D" id="3.40.605.10">
    <property type="entry name" value="Aldehyde Dehydrogenase, Chain A, domain 1"/>
    <property type="match status" value="1"/>
</dbReference>
<dbReference type="Gene3D" id="3.40.309.10">
    <property type="entry name" value="Aldehyde Dehydrogenase, Chain A, domain 2"/>
    <property type="match status" value="1"/>
</dbReference>
<dbReference type="HAMAP" id="MF_00412">
    <property type="entry name" value="ProA"/>
    <property type="match status" value="1"/>
</dbReference>
<dbReference type="InterPro" id="IPR016161">
    <property type="entry name" value="Ald_DH/histidinol_DH"/>
</dbReference>
<dbReference type="InterPro" id="IPR016163">
    <property type="entry name" value="Ald_DH_C"/>
</dbReference>
<dbReference type="InterPro" id="IPR016162">
    <property type="entry name" value="Ald_DH_N"/>
</dbReference>
<dbReference type="InterPro" id="IPR015590">
    <property type="entry name" value="Aldehyde_DH_dom"/>
</dbReference>
<dbReference type="InterPro" id="IPR020593">
    <property type="entry name" value="G-glutamylP_reductase_CS"/>
</dbReference>
<dbReference type="InterPro" id="IPR012134">
    <property type="entry name" value="Glu-5-SA_DH"/>
</dbReference>
<dbReference type="InterPro" id="IPR000965">
    <property type="entry name" value="GPR_dom"/>
</dbReference>
<dbReference type="NCBIfam" id="NF001221">
    <property type="entry name" value="PRK00197.1"/>
    <property type="match status" value="1"/>
</dbReference>
<dbReference type="NCBIfam" id="TIGR00407">
    <property type="entry name" value="proA"/>
    <property type="match status" value="1"/>
</dbReference>
<dbReference type="PANTHER" id="PTHR11063:SF8">
    <property type="entry name" value="DELTA-1-PYRROLINE-5-CARBOXYLATE SYNTHASE"/>
    <property type="match status" value="1"/>
</dbReference>
<dbReference type="PANTHER" id="PTHR11063">
    <property type="entry name" value="GLUTAMATE SEMIALDEHYDE DEHYDROGENASE"/>
    <property type="match status" value="1"/>
</dbReference>
<dbReference type="Pfam" id="PF00171">
    <property type="entry name" value="Aldedh"/>
    <property type="match status" value="1"/>
</dbReference>
<dbReference type="PIRSF" id="PIRSF000151">
    <property type="entry name" value="GPR"/>
    <property type="match status" value="1"/>
</dbReference>
<dbReference type="SUPFAM" id="SSF53720">
    <property type="entry name" value="ALDH-like"/>
    <property type="match status" value="1"/>
</dbReference>
<dbReference type="PROSITE" id="PS01223">
    <property type="entry name" value="PROA"/>
    <property type="match status" value="1"/>
</dbReference>